<evidence type="ECO:0000255" key="1">
    <source>
        <dbReference type="HAMAP-Rule" id="MF_01331"/>
    </source>
</evidence>
<evidence type="ECO:0000305" key="2"/>
<gene>
    <name evidence="1" type="primary">rplV</name>
    <name type="ordered locus">CKO_04730</name>
</gene>
<reference key="1">
    <citation type="submission" date="2007-08" db="EMBL/GenBank/DDBJ databases">
        <authorList>
            <consortium name="The Citrobacter koseri Genome Sequencing Project"/>
            <person name="McClelland M."/>
            <person name="Sanderson E.K."/>
            <person name="Porwollik S."/>
            <person name="Spieth J."/>
            <person name="Clifton W.S."/>
            <person name="Latreille P."/>
            <person name="Courtney L."/>
            <person name="Wang C."/>
            <person name="Pepin K."/>
            <person name="Bhonagiri V."/>
            <person name="Nash W."/>
            <person name="Johnson M."/>
            <person name="Thiruvilangam P."/>
            <person name="Wilson R."/>
        </authorList>
    </citation>
    <scope>NUCLEOTIDE SEQUENCE [LARGE SCALE GENOMIC DNA]</scope>
    <source>
        <strain>ATCC BAA-895 / CDC 4225-83 / SGSC4696</strain>
    </source>
</reference>
<protein>
    <recommendedName>
        <fullName evidence="1">Large ribosomal subunit protein uL22</fullName>
    </recommendedName>
    <alternativeName>
        <fullName evidence="2">50S ribosomal protein L22</fullName>
    </alternativeName>
</protein>
<keyword id="KW-1185">Reference proteome</keyword>
<keyword id="KW-0687">Ribonucleoprotein</keyword>
<keyword id="KW-0689">Ribosomal protein</keyword>
<keyword id="KW-0694">RNA-binding</keyword>
<keyword id="KW-0699">rRNA-binding</keyword>
<name>RL22_CITK8</name>
<feature type="chain" id="PRO_1000052558" description="Large ribosomal subunit protein uL22">
    <location>
        <begin position="1"/>
        <end position="110"/>
    </location>
</feature>
<sequence>METIAKHRHARSSAQKVRLVADLIRGKKVSQALDILTYTNKKAAVLVKKVLESAIANAEHNDGADIDDLKVTKIFVDEGPSMKRIMPRAKGRADRILKRTSHITVVVSDR</sequence>
<organism>
    <name type="scientific">Citrobacter koseri (strain ATCC BAA-895 / CDC 4225-83 / SGSC4696)</name>
    <dbReference type="NCBI Taxonomy" id="290338"/>
    <lineage>
        <taxon>Bacteria</taxon>
        <taxon>Pseudomonadati</taxon>
        <taxon>Pseudomonadota</taxon>
        <taxon>Gammaproteobacteria</taxon>
        <taxon>Enterobacterales</taxon>
        <taxon>Enterobacteriaceae</taxon>
        <taxon>Citrobacter</taxon>
    </lineage>
</organism>
<accession>A8AQL2</accession>
<comment type="function">
    <text evidence="1">This protein binds specifically to 23S rRNA; its binding is stimulated by other ribosomal proteins, e.g. L4, L17, and L20. It is important during the early stages of 50S assembly. It makes multiple contacts with different domains of the 23S rRNA in the assembled 50S subunit and ribosome (By similarity).</text>
</comment>
<comment type="function">
    <text evidence="1">The globular domain of the protein is located near the polypeptide exit tunnel on the outside of the subunit, while an extended beta-hairpin is found that lines the wall of the exit tunnel in the center of the 70S ribosome.</text>
</comment>
<comment type="subunit">
    <text evidence="1">Part of the 50S ribosomal subunit.</text>
</comment>
<comment type="similarity">
    <text evidence="1">Belongs to the universal ribosomal protein uL22 family.</text>
</comment>
<dbReference type="EMBL" id="CP000822">
    <property type="protein sequence ID" value="ABV15775.1"/>
    <property type="molecule type" value="Genomic_DNA"/>
</dbReference>
<dbReference type="RefSeq" id="WP_000447529.1">
    <property type="nucleotide sequence ID" value="NC_009792.1"/>
</dbReference>
<dbReference type="SMR" id="A8AQL2"/>
<dbReference type="STRING" id="290338.CKO_04730"/>
<dbReference type="GeneID" id="93778672"/>
<dbReference type="KEGG" id="cko:CKO_04730"/>
<dbReference type="HOGENOM" id="CLU_083987_3_3_6"/>
<dbReference type="OrthoDB" id="9805969at2"/>
<dbReference type="Proteomes" id="UP000008148">
    <property type="component" value="Chromosome"/>
</dbReference>
<dbReference type="GO" id="GO:0022625">
    <property type="term" value="C:cytosolic large ribosomal subunit"/>
    <property type="evidence" value="ECO:0007669"/>
    <property type="project" value="TreeGrafter"/>
</dbReference>
<dbReference type="GO" id="GO:0019843">
    <property type="term" value="F:rRNA binding"/>
    <property type="evidence" value="ECO:0007669"/>
    <property type="project" value="UniProtKB-UniRule"/>
</dbReference>
<dbReference type="GO" id="GO:0003735">
    <property type="term" value="F:structural constituent of ribosome"/>
    <property type="evidence" value="ECO:0007669"/>
    <property type="project" value="InterPro"/>
</dbReference>
<dbReference type="GO" id="GO:0006412">
    <property type="term" value="P:translation"/>
    <property type="evidence" value="ECO:0007669"/>
    <property type="project" value="UniProtKB-UniRule"/>
</dbReference>
<dbReference type="CDD" id="cd00336">
    <property type="entry name" value="Ribosomal_L22"/>
    <property type="match status" value="1"/>
</dbReference>
<dbReference type="FunFam" id="3.90.470.10:FF:000001">
    <property type="entry name" value="50S ribosomal protein L22"/>
    <property type="match status" value="1"/>
</dbReference>
<dbReference type="Gene3D" id="3.90.470.10">
    <property type="entry name" value="Ribosomal protein L22/L17"/>
    <property type="match status" value="1"/>
</dbReference>
<dbReference type="HAMAP" id="MF_01331_B">
    <property type="entry name" value="Ribosomal_uL22_B"/>
    <property type="match status" value="1"/>
</dbReference>
<dbReference type="InterPro" id="IPR001063">
    <property type="entry name" value="Ribosomal_uL22"/>
</dbReference>
<dbReference type="InterPro" id="IPR005727">
    <property type="entry name" value="Ribosomal_uL22_bac/chlpt-type"/>
</dbReference>
<dbReference type="InterPro" id="IPR047867">
    <property type="entry name" value="Ribosomal_uL22_bac/org-type"/>
</dbReference>
<dbReference type="InterPro" id="IPR018260">
    <property type="entry name" value="Ribosomal_uL22_CS"/>
</dbReference>
<dbReference type="InterPro" id="IPR036394">
    <property type="entry name" value="Ribosomal_uL22_sf"/>
</dbReference>
<dbReference type="NCBIfam" id="TIGR01044">
    <property type="entry name" value="rplV_bact"/>
    <property type="match status" value="1"/>
</dbReference>
<dbReference type="PANTHER" id="PTHR13501">
    <property type="entry name" value="CHLOROPLAST 50S RIBOSOMAL PROTEIN L22-RELATED"/>
    <property type="match status" value="1"/>
</dbReference>
<dbReference type="PANTHER" id="PTHR13501:SF8">
    <property type="entry name" value="LARGE RIBOSOMAL SUBUNIT PROTEIN UL22M"/>
    <property type="match status" value="1"/>
</dbReference>
<dbReference type="Pfam" id="PF00237">
    <property type="entry name" value="Ribosomal_L22"/>
    <property type="match status" value="1"/>
</dbReference>
<dbReference type="SUPFAM" id="SSF54843">
    <property type="entry name" value="Ribosomal protein L22"/>
    <property type="match status" value="1"/>
</dbReference>
<dbReference type="PROSITE" id="PS00464">
    <property type="entry name" value="RIBOSOMAL_L22"/>
    <property type="match status" value="1"/>
</dbReference>
<proteinExistence type="inferred from homology"/>